<reference key="1">
    <citation type="journal article" date="2008" name="BMC Plant Biol.">
        <title>Complete nucleotide sequence of the Cryptomeria japonica D. Don. chloroplast genome and comparative chloroplast genomics: diversified genomic structure of coniferous species.</title>
        <authorList>
            <person name="Hirao T."/>
            <person name="Watanabe A."/>
            <person name="Kurita M."/>
            <person name="Kondo T."/>
            <person name="Takata K."/>
        </authorList>
    </citation>
    <scope>NUCLEOTIDE SEQUENCE [LARGE SCALE GENOMIC DNA]</scope>
</reference>
<sequence length="508" mass="56010">MGLPWYRVHTVVLNDPGRLIAVHIMHTALVSGWAGSMALYELAVFDPSDPILDPMWRQGMFVIPFMTRLGIKDSWGGWSITGETGSNPGIWSYEGVAGAHIVFSGLCFLAAIWHWVYWDLDVFCDSRTGKPSLDLPKIFGIHLFLSGAACFGFGAFHVTGLYGPGIWVSDPYGLTGKIQPVNPAWGAEGFDPFVPGGIASHHIAAGILGILAGLFHLSVRPPQRLYKGLRMGNIETVLSSSIAAVFFAAFIVAGTMWYGSATTPIELFGPTRYQWDQGYFQQEIDRRVRAGLAENLSLSEAWSKIPEKLAFYDYIGNNPAKGGLFRAGAMDNGDGIAVGWLGHPIFKDKNGHELFVRRMPTFFETFPVVLVDEEGIVKADVPFRRAESKYSVEQVGVTVEFYGGELDGVSFGDPAIVKKYARRAQLGEIFELDRATLKSDGVFRSSPRGWFTFGHATFALLFFFGHIWHGARTLFRDVFAGIDPDLDAQVEFGAFQKLGDPTTKRQVV</sequence>
<dbReference type="EMBL" id="AP009377">
    <property type="protein sequence ID" value="BAG16632.1"/>
    <property type="molecule type" value="Genomic_DNA"/>
</dbReference>
<dbReference type="RefSeq" id="YP_001806634.1">
    <property type="nucleotide sequence ID" value="NC_010548.1"/>
</dbReference>
<dbReference type="SMR" id="B1VKC1"/>
<dbReference type="GeneID" id="6166593"/>
<dbReference type="KEGG" id="cjf:6166593"/>
<dbReference type="OrthoDB" id="1843540at2759"/>
<dbReference type="GO" id="GO:0009535">
    <property type="term" value="C:chloroplast thylakoid membrane"/>
    <property type="evidence" value="ECO:0007669"/>
    <property type="project" value="UniProtKB-SubCell"/>
</dbReference>
<dbReference type="GO" id="GO:0009523">
    <property type="term" value="C:photosystem II"/>
    <property type="evidence" value="ECO:0007669"/>
    <property type="project" value="UniProtKB-KW"/>
</dbReference>
<dbReference type="GO" id="GO:0016168">
    <property type="term" value="F:chlorophyll binding"/>
    <property type="evidence" value="ECO:0007669"/>
    <property type="project" value="UniProtKB-UniRule"/>
</dbReference>
<dbReference type="GO" id="GO:0045156">
    <property type="term" value="F:electron transporter, transferring electrons within the cyclic electron transport pathway of photosynthesis activity"/>
    <property type="evidence" value="ECO:0007669"/>
    <property type="project" value="InterPro"/>
</dbReference>
<dbReference type="GO" id="GO:0009772">
    <property type="term" value="P:photosynthetic electron transport in photosystem II"/>
    <property type="evidence" value="ECO:0007669"/>
    <property type="project" value="InterPro"/>
</dbReference>
<dbReference type="FunFam" id="3.10.680.10:FF:000001">
    <property type="entry name" value="Photosystem II CP47 reaction center protein"/>
    <property type="match status" value="1"/>
</dbReference>
<dbReference type="Gene3D" id="3.10.680.10">
    <property type="entry name" value="Photosystem II CP47 reaction center protein"/>
    <property type="match status" value="1"/>
</dbReference>
<dbReference type="HAMAP" id="MF_01495">
    <property type="entry name" value="PSII_PsbB_CP47"/>
    <property type="match status" value="1"/>
</dbReference>
<dbReference type="InterPro" id="IPR000932">
    <property type="entry name" value="PS_antenna-like"/>
</dbReference>
<dbReference type="InterPro" id="IPR036001">
    <property type="entry name" value="PS_II_antenna-like_sf"/>
</dbReference>
<dbReference type="InterPro" id="IPR017486">
    <property type="entry name" value="PSII_PsbB"/>
</dbReference>
<dbReference type="NCBIfam" id="TIGR03039">
    <property type="entry name" value="PS_II_CP47"/>
    <property type="match status" value="1"/>
</dbReference>
<dbReference type="PANTHER" id="PTHR33180">
    <property type="entry name" value="PHOTOSYSTEM II CP43 REACTION CENTER PROTEIN"/>
    <property type="match status" value="1"/>
</dbReference>
<dbReference type="PANTHER" id="PTHR33180:SF37">
    <property type="entry name" value="PHOTOSYSTEM II CP43 REACTION CENTER PROTEIN"/>
    <property type="match status" value="1"/>
</dbReference>
<dbReference type="Pfam" id="PF00421">
    <property type="entry name" value="PSII"/>
    <property type="match status" value="1"/>
</dbReference>
<dbReference type="SUPFAM" id="SSF161077">
    <property type="entry name" value="Photosystem II antenna protein-like"/>
    <property type="match status" value="1"/>
</dbReference>
<gene>
    <name evidence="1" type="primary">psbB</name>
</gene>
<accession>B1VKC1</accession>
<proteinExistence type="inferred from homology"/>
<name>PSBB_CRYJA</name>
<organism>
    <name type="scientific">Cryptomeria japonica</name>
    <name type="common">Japanese cedar</name>
    <name type="synonym">Cupressus japonica</name>
    <dbReference type="NCBI Taxonomy" id="3369"/>
    <lineage>
        <taxon>Eukaryota</taxon>
        <taxon>Viridiplantae</taxon>
        <taxon>Streptophyta</taxon>
        <taxon>Embryophyta</taxon>
        <taxon>Tracheophyta</taxon>
        <taxon>Spermatophyta</taxon>
        <taxon>Pinopsida</taxon>
        <taxon>Pinidae</taxon>
        <taxon>Conifers II</taxon>
        <taxon>Cupressales</taxon>
        <taxon>Cupressaceae</taxon>
        <taxon>Cryptomeria</taxon>
    </lineage>
</organism>
<comment type="function">
    <text evidence="1">One of the components of the core complex of photosystem II (PSII). It binds chlorophyll and helps catalyze the primary light-induced photochemical processes of PSII. PSII is a light-driven water:plastoquinone oxidoreductase, using light energy to abstract electrons from H(2)O, generating O(2) and a proton gradient subsequently used for ATP formation.</text>
</comment>
<comment type="cofactor">
    <text evidence="1">Binds multiple chlorophylls. PSII binds additional chlorophylls, carotenoids and specific lipids.</text>
</comment>
<comment type="subunit">
    <text evidence="1">PSII is composed of 1 copy each of membrane proteins PsbA, PsbB, PsbC, PsbD, PsbE, PsbF, PsbH, PsbI, PsbJ, PsbK, PsbL, PsbM, PsbT, PsbX, PsbY, PsbZ, Psb30/Ycf12, at least 3 peripheral proteins of the oxygen-evolving complex and a large number of cofactors. It forms dimeric complexes.</text>
</comment>
<comment type="subcellular location">
    <subcellularLocation>
        <location evidence="1">Plastid</location>
        <location evidence="1">Chloroplast thylakoid membrane</location>
        <topology evidence="1">Multi-pass membrane protein</topology>
    </subcellularLocation>
</comment>
<comment type="similarity">
    <text evidence="1">Belongs to the PsbB/PsbC family. PsbB subfamily.</text>
</comment>
<evidence type="ECO:0000255" key="1">
    <source>
        <dbReference type="HAMAP-Rule" id="MF_01495"/>
    </source>
</evidence>
<geneLocation type="chloroplast"/>
<protein>
    <recommendedName>
        <fullName evidence="1">Photosystem II CP47 reaction center protein</fullName>
    </recommendedName>
    <alternativeName>
        <fullName evidence="1">PSII 47 kDa protein</fullName>
    </alternativeName>
    <alternativeName>
        <fullName evidence="1">Protein CP-47</fullName>
    </alternativeName>
</protein>
<keyword id="KW-0148">Chlorophyll</keyword>
<keyword id="KW-0150">Chloroplast</keyword>
<keyword id="KW-0157">Chromophore</keyword>
<keyword id="KW-0472">Membrane</keyword>
<keyword id="KW-0602">Photosynthesis</keyword>
<keyword id="KW-0604">Photosystem II</keyword>
<keyword id="KW-0934">Plastid</keyword>
<keyword id="KW-0793">Thylakoid</keyword>
<keyword id="KW-0812">Transmembrane</keyword>
<keyword id="KW-1133">Transmembrane helix</keyword>
<feature type="chain" id="PRO_0000359813" description="Photosystem II CP47 reaction center protein">
    <location>
        <begin position="1"/>
        <end position="508"/>
    </location>
</feature>
<feature type="transmembrane region" description="Helical" evidence="1">
    <location>
        <begin position="21"/>
        <end position="36"/>
    </location>
</feature>
<feature type="transmembrane region" description="Helical" evidence="1">
    <location>
        <begin position="101"/>
        <end position="115"/>
    </location>
</feature>
<feature type="transmembrane region" description="Helical" evidence="1">
    <location>
        <begin position="140"/>
        <end position="156"/>
    </location>
</feature>
<feature type="transmembrane region" description="Helical" evidence="1">
    <location>
        <begin position="203"/>
        <end position="218"/>
    </location>
</feature>
<feature type="transmembrane region" description="Helical" evidence="1">
    <location>
        <begin position="237"/>
        <end position="252"/>
    </location>
</feature>
<feature type="transmembrane region" description="Helical" evidence="1">
    <location>
        <begin position="457"/>
        <end position="472"/>
    </location>
</feature>